<comment type="function">
    <text>Bacteriostatic action for Gram-positive bacteria.</text>
</comment>
<comment type="subcellular location">
    <subcellularLocation>
        <location>Secreted</location>
    </subcellularLocation>
</comment>
<comment type="tissue specificity">
    <text>Expressed by the dorsal and submental skin glands.</text>
</comment>
<name>CT13_RANCI</name>
<proteinExistence type="evidence at protein level"/>
<organism>
    <name type="scientific">Ranoidea citropa</name>
    <name type="common">Australian Blue Mountains tree frog</name>
    <name type="synonym">Litoria citropa</name>
    <dbReference type="NCBI Taxonomy" id="94770"/>
    <lineage>
        <taxon>Eukaryota</taxon>
        <taxon>Metazoa</taxon>
        <taxon>Chordata</taxon>
        <taxon>Craniata</taxon>
        <taxon>Vertebrata</taxon>
        <taxon>Euteleostomi</taxon>
        <taxon>Amphibia</taxon>
        <taxon>Batrachia</taxon>
        <taxon>Anura</taxon>
        <taxon>Neobatrachia</taxon>
        <taxon>Hyloidea</taxon>
        <taxon>Hylidae</taxon>
        <taxon>Pelodryadinae</taxon>
        <taxon>Ranoidea</taxon>
    </lineage>
</organism>
<protein>
    <recommendedName>
        <fullName>Citropin-1.3</fullName>
    </recommendedName>
</protein>
<reference key="1">
    <citation type="journal article" date="1999" name="Eur. J. Biochem.">
        <title>Host defence peptides from the skin glands of the Australian blue mountains tree-frog Litoria citropa. Solution structure of the antibacterial peptide citropin 1.1.</title>
        <authorList>
            <person name="Wegener K.L."/>
            <person name="Wabnitz P.A."/>
            <person name="Carver J.A."/>
            <person name="Bowie J.H."/>
            <person name="Chia B.C.S."/>
            <person name="Wallace J.C."/>
            <person name="Tyler M.J."/>
        </authorList>
    </citation>
    <scope>PROTEIN SEQUENCE</scope>
    <scope>AMIDATION AT LEU-16</scope>
    <source>
        <tissue>Skin secretion</tissue>
    </source>
</reference>
<evidence type="ECO:0000269" key="1">
    <source>
    </source>
</evidence>
<sequence>GLFDIIKKVASVIGGL</sequence>
<feature type="peptide" id="PRO_0000043767" description="Citropin-1.3">
    <location>
        <begin position="1"/>
        <end position="16"/>
    </location>
</feature>
<feature type="modified residue" description="Leucine amide" evidence="1">
    <location>
        <position position="16"/>
    </location>
</feature>
<keyword id="KW-0027">Amidation</keyword>
<keyword id="KW-0878">Amphibian defense peptide</keyword>
<keyword id="KW-0044">Antibiotic</keyword>
<keyword id="KW-0929">Antimicrobial</keyword>
<keyword id="KW-0903">Direct protein sequencing</keyword>
<keyword id="KW-0964">Secreted</keyword>
<accession>P81846</accession>
<dbReference type="GO" id="GO:0005576">
    <property type="term" value="C:extracellular region"/>
    <property type="evidence" value="ECO:0007669"/>
    <property type="project" value="UniProtKB-SubCell"/>
</dbReference>
<dbReference type="GO" id="GO:0042742">
    <property type="term" value="P:defense response to bacterium"/>
    <property type="evidence" value="ECO:0007669"/>
    <property type="project" value="UniProtKB-KW"/>
</dbReference>
<dbReference type="InterPro" id="IPR013157">
    <property type="entry name" value="Aurein_antimicrobial_peptide"/>
</dbReference>
<dbReference type="Pfam" id="PF08256">
    <property type="entry name" value="Antimicrobial20"/>
    <property type="match status" value="1"/>
</dbReference>